<name>ABLM2_RAT</name>
<organism>
    <name type="scientific">Rattus norvegicus</name>
    <name type="common">Rat</name>
    <dbReference type="NCBI Taxonomy" id="10116"/>
    <lineage>
        <taxon>Eukaryota</taxon>
        <taxon>Metazoa</taxon>
        <taxon>Chordata</taxon>
        <taxon>Craniata</taxon>
        <taxon>Vertebrata</taxon>
        <taxon>Euteleostomi</taxon>
        <taxon>Mammalia</taxon>
        <taxon>Eutheria</taxon>
        <taxon>Euarchontoglires</taxon>
        <taxon>Glires</taxon>
        <taxon>Rodentia</taxon>
        <taxon>Myomorpha</taxon>
        <taxon>Muroidea</taxon>
        <taxon>Muridae</taxon>
        <taxon>Murinae</taxon>
        <taxon>Rattus</taxon>
    </lineage>
</organism>
<sequence length="612" mass="68010">MSAVSQPQAAHAPLEKPASTAILCNTCGNVCKGEVLRVQNKHFHIRCFVCKACGCDLAEGGFFVRQGEHICTRDYQRLYGTRCFSCDCFIEGEVVSALGKTYHPDCFVCAVCRLPFPPGDRVTFNGKDCMCQKCSPPTLVGNSAHVAQGLRSCGGCGLEIKNGQALVALDKHWHLGCFKCKTCGKLLNAEYISKDGLPYCEADYHTKFGIRCDGCEKYITGRVLEAGEKHYHPSCALCVRCGQMFSEGEEMYLQGSSIWHPACRQAARTEDKSKETRTSSESIVSVPASSTSGSPSRVIYAKLGDEILDYRDLAALPKNKAIYNIDRPDMISYSPYISHSAVGDRQSYGEGDQDDRSYKQCRTSSPSSAGSVSLGHYTPTSRSPQHYSRPGSESGRSTPSLSVHSDSRPPSSTYQQAPRHFHVPDTGVKDNIYRKPPIYKQHAARRLDVEDSSFDQDSRKKTTWLLLKGDADTRTNSPDLDSQSLSLSSGADQEPLQRMPGDSLYSRFPYSKPDTLPGPRKDGLDLRNANLAPCGADPDASWGTREYKIYPYDSLIVTNRIRVKLPKDVDRTRLERHLSPEEFQEVFGMSIEEFDRLALWKRNDLKKKALLF</sequence>
<feature type="chain" id="PRO_0000075701" description="Actin-binding LIM protein 2">
    <location>
        <begin position="1"/>
        <end position="612"/>
    </location>
</feature>
<feature type="domain" description="LIM zinc-binding 1" evidence="3">
    <location>
        <begin position="22"/>
        <end position="81"/>
    </location>
</feature>
<feature type="domain" description="LIM zinc-binding 2" evidence="3">
    <location>
        <begin position="81"/>
        <end position="141"/>
    </location>
</feature>
<feature type="domain" description="LIM zinc-binding 3" evidence="3">
    <location>
        <begin position="151"/>
        <end position="210"/>
    </location>
</feature>
<feature type="domain" description="LIM zinc-binding 4" evidence="3">
    <location>
        <begin position="210"/>
        <end position="270"/>
    </location>
</feature>
<feature type="domain" description="HP" evidence="4">
    <location>
        <begin position="544"/>
        <end position="612"/>
    </location>
</feature>
<feature type="region of interest" description="Disordered" evidence="5">
    <location>
        <begin position="269"/>
        <end position="295"/>
    </location>
</feature>
<feature type="region of interest" description="Disordered" evidence="5">
    <location>
        <begin position="341"/>
        <end position="433"/>
    </location>
</feature>
<feature type="region of interest" description="Disordered" evidence="5">
    <location>
        <begin position="471"/>
        <end position="520"/>
    </location>
</feature>
<feature type="compositionally biased region" description="Basic and acidic residues" evidence="5">
    <location>
        <begin position="269"/>
        <end position="278"/>
    </location>
</feature>
<feature type="compositionally biased region" description="Low complexity" evidence="5">
    <location>
        <begin position="279"/>
        <end position="295"/>
    </location>
</feature>
<feature type="compositionally biased region" description="Low complexity" evidence="5">
    <location>
        <begin position="364"/>
        <end position="373"/>
    </location>
</feature>
<feature type="compositionally biased region" description="Polar residues" evidence="5">
    <location>
        <begin position="394"/>
        <end position="416"/>
    </location>
</feature>
<feature type="compositionally biased region" description="Low complexity" evidence="5">
    <location>
        <begin position="477"/>
        <end position="489"/>
    </location>
</feature>
<feature type="binding site" evidence="1">
    <location>
        <position position="83"/>
    </location>
    <ligand>
        <name>Zn(2+)</name>
        <dbReference type="ChEBI" id="CHEBI:29105"/>
        <label>1</label>
    </ligand>
</feature>
<feature type="binding site" evidence="1">
    <location>
        <position position="86"/>
    </location>
    <ligand>
        <name>Zn(2+)</name>
        <dbReference type="ChEBI" id="CHEBI:29105"/>
        <label>1</label>
    </ligand>
</feature>
<feature type="binding site" evidence="1">
    <location>
        <position position="103"/>
    </location>
    <ligand>
        <name>Zn(2+)</name>
        <dbReference type="ChEBI" id="CHEBI:29105"/>
        <label>1</label>
    </ligand>
</feature>
<feature type="binding site" evidence="1">
    <location>
        <position position="106"/>
    </location>
    <ligand>
        <name>Zn(2+)</name>
        <dbReference type="ChEBI" id="CHEBI:29105"/>
        <label>1</label>
    </ligand>
</feature>
<feature type="binding site" evidence="1">
    <location>
        <position position="109"/>
    </location>
    <ligand>
        <name>Zn(2+)</name>
        <dbReference type="ChEBI" id="CHEBI:29105"/>
        <label>2</label>
    </ligand>
</feature>
<feature type="binding site" evidence="1">
    <location>
        <position position="112"/>
    </location>
    <ligand>
        <name>Zn(2+)</name>
        <dbReference type="ChEBI" id="CHEBI:29105"/>
        <label>2</label>
    </ligand>
</feature>
<feature type="binding site" evidence="1">
    <location>
        <position position="131"/>
    </location>
    <ligand>
        <name>Zn(2+)</name>
        <dbReference type="ChEBI" id="CHEBI:29105"/>
        <label>2</label>
    </ligand>
</feature>
<feature type="binding site" evidence="1">
    <location>
        <position position="134"/>
    </location>
    <ligand>
        <name>Zn(2+)</name>
        <dbReference type="ChEBI" id="CHEBI:29105"/>
        <label>2</label>
    </ligand>
</feature>
<feature type="binding site" evidence="1">
    <location>
        <position position="212"/>
    </location>
    <ligand>
        <name>Zn(2+)</name>
        <dbReference type="ChEBI" id="CHEBI:29105"/>
        <label>3</label>
    </ligand>
</feature>
<feature type="binding site" evidence="1">
    <location>
        <position position="215"/>
    </location>
    <ligand>
        <name>Zn(2+)</name>
        <dbReference type="ChEBI" id="CHEBI:29105"/>
        <label>3</label>
    </ligand>
</feature>
<feature type="binding site" evidence="1">
    <location>
        <position position="232"/>
    </location>
    <ligand>
        <name>Zn(2+)</name>
        <dbReference type="ChEBI" id="CHEBI:29105"/>
        <label>3</label>
    </ligand>
</feature>
<feature type="binding site" evidence="1">
    <location>
        <position position="235"/>
    </location>
    <ligand>
        <name>Zn(2+)</name>
        <dbReference type="ChEBI" id="CHEBI:29105"/>
        <label>3</label>
    </ligand>
</feature>
<feature type="binding site" evidence="1">
    <location>
        <position position="238"/>
    </location>
    <ligand>
        <name>Zn(2+)</name>
        <dbReference type="ChEBI" id="CHEBI:29105"/>
        <label>4</label>
    </ligand>
</feature>
<feature type="binding site" evidence="1">
    <location>
        <position position="241"/>
    </location>
    <ligand>
        <name>Zn(2+)</name>
        <dbReference type="ChEBI" id="CHEBI:29105"/>
        <label>4</label>
    </ligand>
</feature>
<feature type="binding site" evidence="1">
    <location>
        <position position="260"/>
    </location>
    <ligand>
        <name>Zn(2+)</name>
        <dbReference type="ChEBI" id="CHEBI:29105"/>
        <label>4</label>
    </ligand>
</feature>
<feature type="binding site" evidence="1">
    <location>
        <position position="263"/>
    </location>
    <ligand>
        <name>Zn(2+)</name>
        <dbReference type="ChEBI" id="CHEBI:29105"/>
        <label>4</label>
    </ligand>
</feature>
<feature type="modified residue" description="Phosphoserine" evidence="7">
    <location>
        <position position="282"/>
    </location>
</feature>
<feature type="modified residue" description="Phosphoserine" evidence="2">
    <location>
        <position position="294"/>
    </location>
</feature>
<feature type="modified residue" description="Phosphoserine" evidence="7">
    <location>
        <position position="365"/>
    </location>
</feature>
<feature type="modified residue" description="Phosphoserine" evidence="2">
    <location>
        <position position="368"/>
    </location>
</feature>
<feature type="modified residue" description="Phosphoserine" evidence="7">
    <location>
        <position position="453"/>
    </location>
</feature>
<feature type="modified residue" description="Phosphothreonine" evidence="2">
    <location>
        <position position="473"/>
    </location>
</feature>
<feature type="modified residue" description="Phosphoserine" evidence="7">
    <location>
        <position position="477"/>
    </location>
</feature>
<feature type="modified residue" description="Phosphoserine" evidence="7">
    <location>
        <position position="579"/>
    </location>
</feature>
<feature type="splice variant" id="VSP_012125" description="In isoform 2." evidence="6">
    <original>RFPYSKPDTLPGPRKDGLDLRNANLAPCGADPDASWGTRE</original>
    <variation>Q</variation>
    <location>
        <begin position="507"/>
        <end position="546"/>
    </location>
</feature>
<protein>
    <recommendedName>
        <fullName>Actin-binding LIM protein 2</fullName>
        <shortName>abLIM-2</shortName>
    </recommendedName>
    <alternativeName>
        <fullName>Actin-binding LIM protein family member 2</fullName>
    </alternativeName>
</protein>
<keyword id="KW-0025">Alternative splicing</keyword>
<keyword id="KW-0963">Cytoplasm</keyword>
<keyword id="KW-0440">LIM domain</keyword>
<keyword id="KW-0479">Metal-binding</keyword>
<keyword id="KW-0597">Phosphoprotein</keyword>
<keyword id="KW-1185">Reference proteome</keyword>
<keyword id="KW-0677">Repeat</keyword>
<keyword id="KW-0862">Zinc</keyword>
<reference key="1">
    <citation type="submission" date="2004-04" db="EMBL/GenBank/DDBJ databases">
        <title>Structure and transcriptional activity of the ABLIM2 gene of human, mouse and rat.</title>
        <authorList>
            <person name="Klimov E.A."/>
            <person name="Rakhmanaliev E.R."/>
            <person name="Rudco O.I."/>
        </authorList>
    </citation>
    <scope>NUCLEOTIDE SEQUENCE [MRNA] (ISOFORMS 1 AND 2)</scope>
    <source>
        <strain>Wistar</strain>
    </source>
</reference>
<reference key="2">
    <citation type="journal article" date="2012" name="Nat. Commun.">
        <title>Quantitative maps of protein phosphorylation sites across 14 different rat organs and tissues.</title>
        <authorList>
            <person name="Lundby A."/>
            <person name="Secher A."/>
            <person name="Lage K."/>
            <person name="Nordsborg N.B."/>
            <person name="Dmytriyev A."/>
            <person name="Lundby C."/>
            <person name="Olsen J.V."/>
        </authorList>
    </citation>
    <scope>PHOSPHORYLATION [LARGE SCALE ANALYSIS] AT SER-282; SER-365; SER-453; SER-477 AND SER-579</scope>
    <scope>IDENTIFICATION BY MASS SPECTROMETRY [LARGE SCALE ANALYSIS]</scope>
</reference>
<evidence type="ECO:0000250" key="1"/>
<evidence type="ECO:0000250" key="2">
    <source>
        <dbReference type="UniProtKB" id="Q8BL65"/>
    </source>
</evidence>
<evidence type="ECO:0000255" key="3">
    <source>
        <dbReference type="PROSITE-ProRule" id="PRU00125"/>
    </source>
</evidence>
<evidence type="ECO:0000255" key="4">
    <source>
        <dbReference type="PROSITE-ProRule" id="PRU00595"/>
    </source>
</evidence>
<evidence type="ECO:0000256" key="5">
    <source>
        <dbReference type="SAM" id="MobiDB-lite"/>
    </source>
</evidence>
<evidence type="ECO:0000303" key="6">
    <source ref="1"/>
</evidence>
<evidence type="ECO:0007744" key="7">
    <source>
    </source>
</evidence>
<gene>
    <name type="primary">Ablim2</name>
</gene>
<dbReference type="EMBL" id="AJ703892">
    <property type="protein sequence ID" value="CAG28314.1"/>
    <property type="molecule type" value="mRNA"/>
</dbReference>
<dbReference type="EMBL" id="AJ703893">
    <property type="protein sequence ID" value="CAG28315.1"/>
    <property type="molecule type" value="mRNA"/>
</dbReference>
<dbReference type="RefSeq" id="NP_001001514.1">
    <molecule id="Q6KC51-2"/>
    <property type="nucleotide sequence ID" value="NM_001001514.2"/>
</dbReference>
<dbReference type="RefSeq" id="NP_001171166.1">
    <molecule id="Q6KC51-1"/>
    <property type="nucleotide sequence ID" value="NM_001177695.1"/>
</dbReference>
<dbReference type="BMRB" id="Q6KC51"/>
<dbReference type="SMR" id="Q6KC51"/>
<dbReference type="BioGRID" id="262329">
    <property type="interactions" value="1"/>
</dbReference>
<dbReference type="FunCoup" id="Q6KC51">
    <property type="interactions" value="1106"/>
</dbReference>
<dbReference type="IntAct" id="Q6KC51">
    <property type="interactions" value="1"/>
</dbReference>
<dbReference type="MINT" id="Q6KC51"/>
<dbReference type="STRING" id="10116.ENSRNOP00000068643"/>
<dbReference type="iPTMnet" id="Q6KC51"/>
<dbReference type="PhosphoSitePlus" id="Q6KC51"/>
<dbReference type="SwissPalm" id="Q6KC51"/>
<dbReference type="PaxDb" id="10116-ENSRNOP00000055116"/>
<dbReference type="Ensembl" id="ENSRNOT00000058315.6">
    <molecule id="Q6KC51-1"/>
    <property type="protein sequence ID" value="ENSRNOP00000055116.5"/>
    <property type="gene ID" value="ENSRNOG00000007882.9"/>
</dbReference>
<dbReference type="GeneID" id="360958"/>
<dbReference type="KEGG" id="rno:360958"/>
<dbReference type="AGR" id="RGD:1303094"/>
<dbReference type="CTD" id="84448"/>
<dbReference type="RGD" id="1303094">
    <property type="gene designation" value="Ablim2"/>
</dbReference>
<dbReference type="eggNOG" id="KOG1044">
    <property type="taxonomic scope" value="Eukaryota"/>
</dbReference>
<dbReference type="GeneTree" id="ENSGT00950000182850"/>
<dbReference type="HOGENOM" id="CLU_001357_12_3_1"/>
<dbReference type="InParanoid" id="Q6KC51"/>
<dbReference type="PRO" id="PR:Q6KC51"/>
<dbReference type="Proteomes" id="UP000002494">
    <property type="component" value="Chromosome 14"/>
</dbReference>
<dbReference type="GO" id="GO:0015629">
    <property type="term" value="C:actin cytoskeleton"/>
    <property type="evidence" value="ECO:0000266"/>
    <property type="project" value="RGD"/>
</dbReference>
<dbReference type="GO" id="GO:0030016">
    <property type="term" value="C:myofibril"/>
    <property type="evidence" value="ECO:0000266"/>
    <property type="project" value="RGD"/>
</dbReference>
<dbReference type="GO" id="GO:0051015">
    <property type="term" value="F:actin filament binding"/>
    <property type="evidence" value="ECO:0000318"/>
    <property type="project" value="GO_Central"/>
</dbReference>
<dbReference type="GO" id="GO:0046872">
    <property type="term" value="F:metal ion binding"/>
    <property type="evidence" value="ECO:0007669"/>
    <property type="project" value="UniProtKB-KW"/>
</dbReference>
<dbReference type="GO" id="GO:0007010">
    <property type="term" value="P:cytoskeleton organization"/>
    <property type="evidence" value="ECO:0007669"/>
    <property type="project" value="InterPro"/>
</dbReference>
<dbReference type="GO" id="GO:0030032">
    <property type="term" value="P:lamellipodium assembly"/>
    <property type="evidence" value="ECO:0000318"/>
    <property type="project" value="GO_Central"/>
</dbReference>
<dbReference type="GO" id="GO:0045944">
    <property type="term" value="P:positive regulation of transcription by RNA polymerase II"/>
    <property type="evidence" value="ECO:0000266"/>
    <property type="project" value="RGD"/>
</dbReference>
<dbReference type="GO" id="GO:0006366">
    <property type="term" value="P:transcription by RNA polymerase II"/>
    <property type="evidence" value="ECO:0000266"/>
    <property type="project" value="RGD"/>
</dbReference>
<dbReference type="CDD" id="cd09327">
    <property type="entry name" value="LIM1_abLIM"/>
    <property type="match status" value="1"/>
</dbReference>
<dbReference type="CDD" id="cd09328">
    <property type="entry name" value="LIM2_abLIM"/>
    <property type="match status" value="1"/>
</dbReference>
<dbReference type="CDD" id="cd09329">
    <property type="entry name" value="LIM3_abLIM"/>
    <property type="match status" value="1"/>
</dbReference>
<dbReference type="CDD" id="cd09330">
    <property type="entry name" value="LIM4_abLIM"/>
    <property type="match status" value="1"/>
</dbReference>
<dbReference type="FunFam" id="2.10.110.10:FF:000003">
    <property type="entry name" value="actin-binding LIM protein 1 isoform X1"/>
    <property type="match status" value="1"/>
</dbReference>
<dbReference type="FunFam" id="2.10.110.10:FF:000004">
    <property type="entry name" value="actin-binding LIM protein 1 isoform X1"/>
    <property type="match status" value="1"/>
</dbReference>
<dbReference type="FunFam" id="2.10.110.10:FF:000007">
    <property type="entry name" value="actin-binding LIM protein 1 isoform X1"/>
    <property type="match status" value="1"/>
</dbReference>
<dbReference type="FunFam" id="1.10.950.10:FF:000001">
    <property type="entry name" value="actin-binding LIM protein 1 isoform X2"/>
    <property type="match status" value="1"/>
</dbReference>
<dbReference type="FunFam" id="2.10.110.10:FF:000053">
    <property type="entry name" value="Actin-binding LIM protein family, member 2"/>
    <property type="match status" value="1"/>
</dbReference>
<dbReference type="Gene3D" id="2.10.110.10">
    <property type="entry name" value="Cysteine Rich Protein"/>
    <property type="match status" value="4"/>
</dbReference>
<dbReference type="Gene3D" id="1.10.950.10">
    <property type="entry name" value="Villin headpiece domain"/>
    <property type="match status" value="1"/>
</dbReference>
<dbReference type="InterPro" id="IPR032402">
    <property type="entry name" value="AbLIM_anchor"/>
</dbReference>
<dbReference type="InterPro" id="IPR051618">
    <property type="entry name" value="Actin-binding_LIM"/>
</dbReference>
<dbReference type="InterPro" id="IPR003128">
    <property type="entry name" value="Villin_headpiece"/>
</dbReference>
<dbReference type="InterPro" id="IPR036886">
    <property type="entry name" value="Villin_headpiece_dom_sf"/>
</dbReference>
<dbReference type="InterPro" id="IPR001781">
    <property type="entry name" value="Znf_LIM"/>
</dbReference>
<dbReference type="PANTHER" id="PTHR24213">
    <property type="entry name" value="ACTIN-BINDING LIM PROTEIN"/>
    <property type="match status" value="1"/>
</dbReference>
<dbReference type="PANTHER" id="PTHR24213:SF6">
    <property type="entry name" value="ACTIN-BINDING LIM PROTEIN 2"/>
    <property type="match status" value="1"/>
</dbReference>
<dbReference type="Pfam" id="PF16182">
    <property type="entry name" value="AbLIM_anchor"/>
    <property type="match status" value="2"/>
</dbReference>
<dbReference type="Pfam" id="PF00412">
    <property type="entry name" value="LIM"/>
    <property type="match status" value="4"/>
</dbReference>
<dbReference type="Pfam" id="PF02209">
    <property type="entry name" value="VHP"/>
    <property type="match status" value="1"/>
</dbReference>
<dbReference type="SMART" id="SM00132">
    <property type="entry name" value="LIM"/>
    <property type="match status" value="4"/>
</dbReference>
<dbReference type="SMART" id="SM00153">
    <property type="entry name" value="VHP"/>
    <property type="match status" value="1"/>
</dbReference>
<dbReference type="SUPFAM" id="SSF57716">
    <property type="entry name" value="Glucocorticoid receptor-like (DNA-binding domain)"/>
    <property type="match status" value="6"/>
</dbReference>
<dbReference type="SUPFAM" id="SSF47050">
    <property type="entry name" value="VHP, Villin headpiece domain"/>
    <property type="match status" value="1"/>
</dbReference>
<dbReference type="PROSITE" id="PS51089">
    <property type="entry name" value="HP"/>
    <property type="match status" value="1"/>
</dbReference>
<dbReference type="PROSITE" id="PS00478">
    <property type="entry name" value="LIM_DOMAIN_1"/>
    <property type="match status" value="4"/>
</dbReference>
<dbReference type="PROSITE" id="PS50023">
    <property type="entry name" value="LIM_DOMAIN_2"/>
    <property type="match status" value="4"/>
</dbReference>
<comment type="function">
    <text evidence="1">May act as scaffold protein. May stimulate ABRA activity and ABRA-dependent SRF transcriptional activity (By similarity).</text>
</comment>
<comment type="subunit">
    <text evidence="1">Interacts with F-actin and ABRA.</text>
</comment>
<comment type="subcellular location">
    <subcellularLocation>
        <location>Cytoplasm</location>
    </subcellularLocation>
    <text evidence="1">In skeletal muscle, sarcomeric or cosarcomeric localization.</text>
</comment>
<comment type="alternative products">
    <event type="alternative splicing"/>
    <isoform>
        <id>Q6KC51-1</id>
        <name>1</name>
        <sequence type="displayed"/>
    </isoform>
    <isoform>
        <id>Q6KC51-2</id>
        <name>2</name>
        <sequence type="described" ref="VSP_012125"/>
    </isoform>
</comment>
<accession>Q6KC51</accession>
<accession>Q6KC50</accession>
<proteinExistence type="evidence at protein level"/>